<feature type="chain" id="PRO_0000237812" description="2-C-methyl-D-erythritol 4-phosphate cytidylyltransferase">
    <location>
        <begin position="1"/>
        <end position="236"/>
    </location>
</feature>
<feature type="site" description="Transition state stabilizer" evidence="1">
    <location>
        <position position="20"/>
    </location>
</feature>
<feature type="site" description="Transition state stabilizer" evidence="1">
    <location>
        <position position="27"/>
    </location>
</feature>
<feature type="site" description="Positions MEP for the nucleophilic attack" evidence="1">
    <location>
        <position position="161"/>
    </location>
</feature>
<feature type="site" description="Positions MEP for the nucleophilic attack" evidence="1">
    <location>
        <position position="217"/>
    </location>
</feature>
<keyword id="KW-0414">Isoprene biosynthesis</keyword>
<keyword id="KW-0548">Nucleotidyltransferase</keyword>
<keyword id="KW-0808">Transferase</keyword>
<accession>Q4ZWQ6</accession>
<dbReference type="EC" id="2.7.7.60" evidence="1"/>
<dbReference type="EMBL" id="CP000075">
    <property type="protein sequence ID" value="AAY36416.1"/>
    <property type="molecule type" value="Genomic_DNA"/>
</dbReference>
<dbReference type="RefSeq" id="WP_004406223.1">
    <property type="nucleotide sequence ID" value="NC_007005.1"/>
</dbReference>
<dbReference type="RefSeq" id="YP_234454.1">
    <property type="nucleotide sequence ID" value="NC_007005.1"/>
</dbReference>
<dbReference type="SMR" id="Q4ZWQ6"/>
<dbReference type="STRING" id="205918.Psyr_1365"/>
<dbReference type="KEGG" id="psb:Psyr_1365"/>
<dbReference type="PATRIC" id="fig|205918.7.peg.1398"/>
<dbReference type="eggNOG" id="COG1211">
    <property type="taxonomic scope" value="Bacteria"/>
</dbReference>
<dbReference type="HOGENOM" id="CLU_061281_3_1_6"/>
<dbReference type="OrthoDB" id="9806837at2"/>
<dbReference type="UniPathway" id="UPA00056">
    <property type="reaction ID" value="UER00093"/>
</dbReference>
<dbReference type="Proteomes" id="UP000000426">
    <property type="component" value="Chromosome"/>
</dbReference>
<dbReference type="GO" id="GO:0050518">
    <property type="term" value="F:2-C-methyl-D-erythritol 4-phosphate cytidylyltransferase activity"/>
    <property type="evidence" value="ECO:0007669"/>
    <property type="project" value="UniProtKB-UniRule"/>
</dbReference>
<dbReference type="GO" id="GO:0019288">
    <property type="term" value="P:isopentenyl diphosphate biosynthetic process, methylerythritol 4-phosphate pathway"/>
    <property type="evidence" value="ECO:0007669"/>
    <property type="project" value="UniProtKB-UniRule"/>
</dbReference>
<dbReference type="CDD" id="cd02516">
    <property type="entry name" value="CDP-ME_synthetase"/>
    <property type="match status" value="1"/>
</dbReference>
<dbReference type="FunFam" id="3.90.550.10:FF:000003">
    <property type="entry name" value="2-C-methyl-D-erythritol 4-phosphate cytidylyltransferase"/>
    <property type="match status" value="1"/>
</dbReference>
<dbReference type="Gene3D" id="3.90.550.10">
    <property type="entry name" value="Spore Coat Polysaccharide Biosynthesis Protein SpsA, Chain A"/>
    <property type="match status" value="1"/>
</dbReference>
<dbReference type="HAMAP" id="MF_00108">
    <property type="entry name" value="IspD"/>
    <property type="match status" value="1"/>
</dbReference>
<dbReference type="InterPro" id="IPR001228">
    <property type="entry name" value="IspD"/>
</dbReference>
<dbReference type="InterPro" id="IPR034683">
    <property type="entry name" value="IspD/TarI"/>
</dbReference>
<dbReference type="InterPro" id="IPR050088">
    <property type="entry name" value="IspD/TarI_cytidylyltransf_bact"/>
</dbReference>
<dbReference type="InterPro" id="IPR018294">
    <property type="entry name" value="ISPD_synthase_CS"/>
</dbReference>
<dbReference type="InterPro" id="IPR029044">
    <property type="entry name" value="Nucleotide-diphossugar_trans"/>
</dbReference>
<dbReference type="NCBIfam" id="TIGR00453">
    <property type="entry name" value="ispD"/>
    <property type="match status" value="1"/>
</dbReference>
<dbReference type="PANTHER" id="PTHR32125">
    <property type="entry name" value="2-C-METHYL-D-ERYTHRITOL 4-PHOSPHATE CYTIDYLYLTRANSFERASE, CHLOROPLASTIC"/>
    <property type="match status" value="1"/>
</dbReference>
<dbReference type="PANTHER" id="PTHR32125:SF4">
    <property type="entry name" value="2-C-METHYL-D-ERYTHRITOL 4-PHOSPHATE CYTIDYLYLTRANSFERASE, CHLOROPLASTIC"/>
    <property type="match status" value="1"/>
</dbReference>
<dbReference type="Pfam" id="PF01128">
    <property type="entry name" value="IspD"/>
    <property type="match status" value="1"/>
</dbReference>
<dbReference type="SUPFAM" id="SSF53448">
    <property type="entry name" value="Nucleotide-diphospho-sugar transferases"/>
    <property type="match status" value="1"/>
</dbReference>
<dbReference type="PROSITE" id="PS01295">
    <property type="entry name" value="ISPD"/>
    <property type="match status" value="1"/>
</dbReference>
<name>ISPD_PSEU2</name>
<organism>
    <name type="scientific">Pseudomonas syringae pv. syringae (strain B728a)</name>
    <dbReference type="NCBI Taxonomy" id="205918"/>
    <lineage>
        <taxon>Bacteria</taxon>
        <taxon>Pseudomonadati</taxon>
        <taxon>Pseudomonadota</taxon>
        <taxon>Gammaproteobacteria</taxon>
        <taxon>Pseudomonadales</taxon>
        <taxon>Pseudomonadaceae</taxon>
        <taxon>Pseudomonas</taxon>
        <taxon>Pseudomonas syringae</taxon>
    </lineage>
</organism>
<sequence>MKDFLPAFWAVIPAAGIGARMAADRPKQYLSLGGLTILEHSLLCFLDHPRLKGLVISLAVDDPYWAALPCAHDTRIQRVDGGSERSGSVLNALLHLHAQGASDNDWVLVHDAARPNLARSDLDNLLGELADDPVGGLLAVPARDTLKRADSSGRVLETVDRSLVWQAFTPQMFRLGALHRALADSLVSNVSITDEASAIEWAGQSPRLIEGRSDNIKVTRPEDLEWLRQRRSEFGR</sequence>
<evidence type="ECO:0000255" key="1">
    <source>
        <dbReference type="HAMAP-Rule" id="MF_00108"/>
    </source>
</evidence>
<protein>
    <recommendedName>
        <fullName evidence="1">2-C-methyl-D-erythritol 4-phosphate cytidylyltransferase</fullName>
        <ecNumber evidence="1">2.7.7.60</ecNumber>
    </recommendedName>
    <alternativeName>
        <fullName evidence="1">4-diphosphocytidyl-2C-methyl-D-erythritol synthase</fullName>
    </alternativeName>
    <alternativeName>
        <fullName evidence="1">MEP cytidylyltransferase</fullName>
        <shortName evidence="1">MCT</shortName>
    </alternativeName>
</protein>
<reference key="1">
    <citation type="journal article" date="2005" name="Proc. Natl. Acad. Sci. U.S.A.">
        <title>Comparison of the complete genome sequences of Pseudomonas syringae pv. syringae B728a and pv. tomato DC3000.</title>
        <authorList>
            <person name="Feil H."/>
            <person name="Feil W.S."/>
            <person name="Chain P."/>
            <person name="Larimer F."/>
            <person name="Dibartolo G."/>
            <person name="Copeland A."/>
            <person name="Lykidis A."/>
            <person name="Trong S."/>
            <person name="Nolan M."/>
            <person name="Goltsman E."/>
            <person name="Thiel J."/>
            <person name="Malfatti S."/>
            <person name="Loper J.E."/>
            <person name="Lapidus A."/>
            <person name="Detter J.C."/>
            <person name="Land M."/>
            <person name="Richardson P.M."/>
            <person name="Kyrpides N.C."/>
            <person name="Ivanova N."/>
            <person name="Lindow S.E."/>
        </authorList>
    </citation>
    <scope>NUCLEOTIDE SEQUENCE [LARGE SCALE GENOMIC DNA]</scope>
    <source>
        <strain>B728a</strain>
    </source>
</reference>
<comment type="function">
    <text evidence="1">Catalyzes the formation of 4-diphosphocytidyl-2-C-methyl-D-erythritol from CTP and 2-C-methyl-D-erythritol 4-phosphate (MEP).</text>
</comment>
<comment type="catalytic activity">
    <reaction evidence="1">
        <text>2-C-methyl-D-erythritol 4-phosphate + CTP + H(+) = 4-CDP-2-C-methyl-D-erythritol + diphosphate</text>
        <dbReference type="Rhea" id="RHEA:13429"/>
        <dbReference type="ChEBI" id="CHEBI:15378"/>
        <dbReference type="ChEBI" id="CHEBI:33019"/>
        <dbReference type="ChEBI" id="CHEBI:37563"/>
        <dbReference type="ChEBI" id="CHEBI:57823"/>
        <dbReference type="ChEBI" id="CHEBI:58262"/>
        <dbReference type="EC" id="2.7.7.60"/>
    </reaction>
</comment>
<comment type="pathway">
    <text evidence="1">Isoprenoid biosynthesis; isopentenyl diphosphate biosynthesis via DXP pathway; isopentenyl diphosphate from 1-deoxy-D-xylulose 5-phosphate: step 2/6.</text>
</comment>
<comment type="similarity">
    <text evidence="1">Belongs to the IspD/TarI cytidylyltransferase family. IspD subfamily.</text>
</comment>
<proteinExistence type="inferred from homology"/>
<gene>
    <name evidence="1" type="primary">ispD</name>
    <name type="ordered locus">Psyr_1365</name>
</gene>